<proteinExistence type="inferred from homology"/>
<accession>Q8EVJ0</accession>
<sequence length="161" mass="17949">MKKIIQFKDNLSSEISEQIKSSKSFIIFEYLGLDAATITKLRKDLFKTGSKLLVLKNNILRRALEKANIKEFGDLVGPNAIVWGTEDEIAPLKEVFNLTKDNECIKIKGSYVEGTFLDAQKTMSIASLPNREGLYSMLLSCLTGPIRGVLYALKAVSETKN</sequence>
<reference key="1">
    <citation type="journal article" date="2002" name="Nucleic Acids Res.">
        <title>The complete genomic sequence of Mycoplasma penetrans, an intracellular bacterial pathogen in humans.</title>
        <authorList>
            <person name="Sasaki Y."/>
            <person name="Ishikawa J."/>
            <person name="Yamashita A."/>
            <person name="Oshima K."/>
            <person name="Kenri T."/>
            <person name="Furuya K."/>
            <person name="Yoshino C."/>
            <person name="Horino A."/>
            <person name="Shiba T."/>
            <person name="Sasaki T."/>
            <person name="Hattori M."/>
        </authorList>
    </citation>
    <scope>NUCLEOTIDE SEQUENCE [LARGE SCALE GENOMIC DNA]</scope>
    <source>
        <strain>HF-2</strain>
    </source>
</reference>
<protein>
    <recommendedName>
        <fullName evidence="1">Large ribosomal subunit protein uL10</fullName>
    </recommendedName>
    <alternativeName>
        <fullName evidence="2">50S ribosomal protein L10</fullName>
    </alternativeName>
</protein>
<comment type="function">
    <text evidence="1">Forms part of the ribosomal stalk, playing a central role in the interaction of the ribosome with GTP-bound translation factors.</text>
</comment>
<comment type="subunit">
    <text evidence="1">Part of the ribosomal stalk of the 50S ribosomal subunit. The N-terminus interacts with L11 and the large rRNA to form the base of the stalk. The C-terminus forms an elongated spine to which L12 dimers bind in a sequential fashion forming a multimeric L10(L12)X complex.</text>
</comment>
<comment type="similarity">
    <text evidence="1">Belongs to the universal ribosomal protein uL10 family.</text>
</comment>
<comment type="sequence caution" evidence="2">
    <conflict type="erroneous initiation">
        <sequence resource="EMBL-CDS" id="BAC44364"/>
    </conflict>
</comment>
<keyword id="KW-1185">Reference proteome</keyword>
<keyword id="KW-0687">Ribonucleoprotein</keyword>
<keyword id="KW-0689">Ribosomal protein</keyword>
<keyword id="KW-0694">RNA-binding</keyword>
<keyword id="KW-0699">rRNA-binding</keyword>
<evidence type="ECO:0000255" key="1">
    <source>
        <dbReference type="HAMAP-Rule" id="MF_00362"/>
    </source>
</evidence>
<evidence type="ECO:0000305" key="2"/>
<name>RL10_MALP2</name>
<gene>
    <name evidence="1" type="primary">rplJ</name>
    <name type="ordered locus">MYPE5740</name>
</gene>
<dbReference type="EMBL" id="BA000026">
    <property type="protein sequence ID" value="BAC44364.1"/>
    <property type="status" value="ALT_INIT"/>
    <property type="molecule type" value="Genomic_DNA"/>
</dbReference>
<dbReference type="RefSeq" id="WP_044891269.1">
    <property type="nucleotide sequence ID" value="NC_004432.1"/>
</dbReference>
<dbReference type="SMR" id="Q8EVJ0"/>
<dbReference type="FunCoup" id="Q8EVJ0">
    <property type="interactions" value="242"/>
</dbReference>
<dbReference type="STRING" id="272633.gene:10731691"/>
<dbReference type="KEGG" id="mpe:MYPE5740"/>
<dbReference type="eggNOG" id="COG0244">
    <property type="taxonomic scope" value="Bacteria"/>
</dbReference>
<dbReference type="HOGENOM" id="CLU_092227_2_0_14"/>
<dbReference type="InParanoid" id="Q8EVJ0"/>
<dbReference type="Proteomes" id="UP000002522">
    <property type="component" value="Chromosome"/>
</dbReference>
<dbReference type="GO" id="GO:1990904">
    <property type="term" value="C:ribonucleoprotein complex"/>
    <property type="evidence" value="ECO:0007669"/>
    <property type="project" value="UniProtKB-KW"/>
</dbReference>
<dbReference type="GO" id="GO:0005840">
    <property type="term" value="C:ribosome"/>
    <property type="evidence" value="ECO:0007669"/>
    <property type="project" value="UniProtKB-KW"/>
</dbReference>
<dbReference type="GO" id="GO:0070180">
    <property type="term" value="F:large ribosomal subunit rRNA binding"/>
    <property type="evidence" value="ECO:0007669"/>
    <property type="project" value="UniProtKB-UniRule"/>
</dbReference>
<dbReference type="GO" id="GO:0006412">
    <property type="term" value="P:translation"/>
    <property type="evidence" value="ECO:0007669"/>
    <property type="project" value="UniProtKB-UniRule"/>
</dbReference>
<dbReference type="CDD" id="cd05797">
    <property type="entry name" value="Ribosomal_L10"/>
    <property type="match status" value="1"/>
</dbReference>
<dbReference type="Gene3D" id="3.30.70.1730">
    <property type="match status" value="1"/>
</dbReference>
<dbReference type="HAMAP" id="MF_00362">
    <property type="entry name" value="Ribosomal_uL10"/>
    <property type="match status" value="1"/>
</dbReference>
<dbReference type="InterPro" id="IPR001790">
    <property type="entry name" value="Ribosomal_uL10"/>
</dbReference>
<dbReference type="InterPro" id="IPR043141">
    <property type="entry name" value="Ribosomal_uL10-like_sf"/>
</dbReference>
<dbReference type="InterPro" id="IPR022973">
    <property type="entry name" value="Ribosomal_uL10_bac"/>
</dbReference>
<dbReference type="InterPro" id="IPR047865">
    <property type="entry name" value="Ribosomal_uL10_bac_type"/>
</dbReference>
<dbReference type="NCBIfam" id="NF000955">
    <property type="entry name" value="PRK00099.1-1"/>
    <property type="match status" value="1"/>
</dbReference>
<dbReference type="PANTHER" id="PTHR11560">
    <property type="entry name" value="39S RIBOSOMAL PROTEIN L10, MITOCHONDRIAL"/>
    <property type="match status" value="1"/>
</dbReference>
<dbReference type="Pfam" id="PF00466">
    <property type="entry name" value="Ribosomal_L10"/>
    <property type="match status" value="1"/>
</dbReference>
<dbReference type="SUPFAM" id="SSF160369">
    <property type="entry name" value="Ribosomal protein L10-like"/>
    <property type="match status" value="1"/>
</dbReference>
<organism>
    <name type="scientific">Malacoplasma penetrans (strain HF-2)</name>
    <name type="common">Mycoplasma penetrans</name>
    <dbReference type="NCBI Taxonomy" id="272633"/>
    <lineage>
        <taxon>Bacteria</taxon>
        <taxon>Bacillati</taxon>
        <taxon>Mycoplasmatota</taxon>
        <taxon>Mycoplasmoidales</taxon>
        <taxon>Mycoplasmoidaceae</taxon>
        <taxon>Malacoplasma</taxon>
    </lineage>
</organism>
<feature type="chain" id="PRO_0000154671" description="Large ribosomal subunit protein uL10">
    <location>
        <begin position="1"/>
        <end position="161"/>
    </location>
</feature>